<protein>
    <recommendedName>
        <fullName evidence="1">Large ribosomal subunit protein bL20</fullName>
    </recommendedName>
    <alternativeName>
        <fullName evidence="2">50S ribosomal protein L20</fullName>
    </alternativeName>
</protein>
<dbReference type="EMBL" id="CP001047">
    <property type="protein sequence ID" value="ACF07115.1"/>
    <property type="molecule type" value="Genomic_DNA"/>
</dbReference>
<dbReference type="RefSeq" id="WP_012498072.1">
    <property type="nucleotide sequence ID" value="NC_011025.1"/>
</dbReference>
<dbReference type="SMR" id="B3PM63"/>
<dbReference type="STRING" id="243272.MARTH_orf194"/>
<dbReference type="KEGG" id="mat:MARTH_orf194"/>
<dbReference type="eggNOG" id="COG0292">
    <property type="taxonomic scope" value="Bacteria"/>
</dbReference>
<dbReference type="HOGENOM" id="CLU_123265_0_1_14"/>
<dbReference type="Proteomes" id="UP000008812">
    <property type="component" value="Chromosome"/>
</dbReference>
<dbReference type="GO" id="GO:1990904">
    <property type="term" value="C:ribonucleoprotein complex"/>
    <property type="evidence" value="ECO:0007669"/>
    <property type="project" value="UniProtKB-KW"/>
</dbReference>
<dbReference type="GO" id="GO:0005840">
    <property type="term" value="C:ribosome"/>
    <property type="evidence" value="ECO:0007669"/>
    <property type="project" value="UniProtKB-KW"/>
</dbReference>
<dbReference type="GO" id="GO:0019843">
    <property type="term" value="F:rRNA binding"/>
    <property type="evidence" value="ECO:0007669"/>
    <property type="project" value="UniProtKB-UniRule"/>
</dbReference>
<dbReference type="GO" id="GO:0003735">
    <property type="term" value="F:structural constituent of ribosome"/>
    <property type="evidence" value="ECO:0007669"/>
    <property type="project" value="InterPro"/>
</dbReference>
<dbReference type="GO" id="GO:0000027">
    <property type="term" value="P:ribosomal large subunit assembly"/>
    <property type="evidence" value="ECO:0007669"/>
    <property type="project" value="UniProtKB-UniRule"/>
</dbReference>
<dbReference type="GO" id="GO:0006412">
    <property type="term" value="P:translation"/>
    <property type="evidence" value="ECO:0007669"/>
    <property type="project" value="InterPro"/>
</dbReference>
<dbReference type="CDD" id="cd07026">
    <property type="entry name" value="Ribosomal_L20"/>
    <property type="match status" value="1"/>
</dbReference>
<dbReference type="FunFam" id="1.10.1900.20:FF:000001">
    <property type="entry name" value="50S ribosomal protein L20"/>
    <property type="match status" value="1"/>
</dbReference>
<dbReference type="Gene3D" id="6.10.160.10">
    <property type="match status" value="1"/>
</dbReference>
<dbReference type="Gene3D" id="1.10.1900.20">
    <property type="entry name" value="Ribosomal protein L20"/>
    <property type="match status" value="1"/>
</dbReference>
<dbReference type="HAMAP" id="MF_00382">
    <property type="entry name" value="Ribosomal_bL20"/>
    <property type="match status" value="1"/>
</dbReference>
<dbReference type="InterPro" id="IPR005813">
    <property type="entry name" value="Ribosomal_bL20"/>
</dbReference>
<dbReference type="InterPro" id="IPR049946">
    <property type="entry name" value="RIBOSOMAL_L20_CS"/>
</dbReference>
<dbReference type="InterPro" id="IPR035566">
    <property type="entry name" value="Ribosomal_protein_bL20_C"/>
</dbReference>
<dbReference type="NCBIfam" id="TIGR01032">
    <property type="entry name" value="rplT_bact"/>
    <property type="match status" value="1"/>
</dbReference>
<dbReference type="PANTHER" id="PTHR10986">
    <property type="entry name" value="39S RIBOSOMAL PROTEIN L20"/>
    <property type="match status" value="1"/>
</dbReference>
<dbReference type="Pfam" id="PF00453">
    <property type="entry name" value="Ribosomal_L20"/>
    <property type="match status" value="1"/>
</dbReference>
<dbReference type="PRINTS" id="PR00062">
    <property type="entry name" value="RIBOSOMALL20"/>
</dbReference>
<dbReference type="SUPFAM" id="SSF74731">
    <property type="entry name" value="Ribosomal protein L20"/>
    <property type="match status" value="1"/>
</dbReference>
<dbReference type="PROSITE" id="PS00937">
    <property type="entry name" value="RIBOSOMAL_L20"/>
    <property type="match status" value="1"/>
</dbReference>
<proteinExistence type="inferred from homology"/>
<gene>
    <name evidence="1" type="primary">rplT</name>
    <name type="ordered locus">MARTH_orf194</name>
</gene>
<accession>B3PM63</accession>
<name>RL20_META1</name>
<keyword id="KW-1185">Reference proteome</keyword>
<keyword id="KW-0687">Ribonucleoprotein</keyword>
<keyword id="KW-0689">Ribosomal protein</keyword>
<keyword id="KW-0694">RNA-binding</keyword>
<keyword id="KW-0699">rRNA-binding</keyword>
<organism>
    <name type="scientific">Metamycoplasma arthritidis (strain 158L3-1)</name>
    <name type="common">Mycoplasma arthritidis</name>
    <dbReference type="NCBI Taxonomy" id="243272"/>
    <lineage>
        <taxon>Bacteria</taxon>
        <taxon>Bacillati</taxon>
        <taxon>Mycoplasmatota</taxon>
        <taxon>Mycoplasmoidales</taxon>
        <taxon>Metamycoplasmataceae</taxon>
        <taxon>Metamycoplasma</taxon>
    </lineage>
</organism>
<evidence type="ECO:0000255" key="1">
    <source>
        <dbReference type="HAMAP-Rule" id="MF_00382"/>
    </source>
</evidence>
<evidence type="ECO:0000305" key="2"/>
<sequence length="119" mass="13832">MRTRGGIVTKRRRNKWLKLAKGYWGHKSIGFKVAKQAVVKSWTYAFRDRKQLKREFRKLWIARINAAARPLGITYSRLIEGLKVANIQINRKMLSELAINYPTAFSQIVEKAKTSLAKK</sequence>
<reference key="1">
    <citation type="journal article" date="2008" name="Infect. Immun.">
        <title>Genome of Mycoplasma arthritidis.</title>
        <authorList>
            <person name="Dybvig K."/>
            <person name="Zuhua C."/>
            <person name="Lao P."/>
            <person name="Jordan D.S."/>
            <person name="French C.T."/>
            <person name="Tu A.H."/>
            <person name="Loraine A.E."/>
        </authorList>
    </citation>
    <scope>NUCLEOTIDE SEQUENCE [LARGE SCALE GENOMIC DNA]</scope>
    <source>
        <strain>158L3-1</strain>
    </source>
</reference>
<feature type="chain" id="PRO_1000122340" description="Large ribosomal subunit protein bL20">
    <location>
        <begin position="1"/>
        <end position="119"/>
    </location>
</feature>
<comment type="function">
    <text evidence="1">Binds directly to 23S ribosomal RNA and is necessary for the in vitro assembly process of the 50S ribosomal subunit. It is not involved in the protein synthesizing functions of that subunit.</text>
</comment>
<comment type="similarity">
    <text evidence="1">Belongs to the bacterial ribosomal protein bL20 family.</text>
</comment>